<name>Y1474_GLOC7</name>
<dbReference type="EMBL" id="CP001291">
    <property type="protein sequence ID" value="ACK69916.1"/>
    <property type="molecule type" value="Genomic_DNA"/>
</dbReference>
<dbReference type="RefSeq" id="WP_012598861.1">
    <property type="nucleotide sequence ID" value="NC_011729.1"/>
</dbReference>
<dbReference type="SMR" id="B7K8F6"/>
<dbReference type="STRING" id="65393.PCC7424_1474"/>
<dbReference type="KEGG" id="cyc:PCC7424_1474"/>
<dbReference type="eggNOG" id="COG1641">
    <property type="taxonomic scope" value="Bacteria"/>
</dbReference>
<dbReference type="HOGENOM" id="CLU_028523_2_1_3"/>
<dbReference type="OrthoDB" id="9765625at2"/>
<dbReference type="Proteomes" id="UP000002384">
    <property type="component" value="Chromosome"/>
</dbReference>
<dbReference type="GO" id="GO:0016829">
    <property type="term" value="F:lyase activity"/>
    <property type="evidence" value="ECO:0007669"/>
    <property type="project" value="UniProtKB-UniRule"/>
</dbReference>
<dbReference type="GO" id="GO:0016151">
    <property type="term" value="F:nickel cation binding"/>
    <property type="evidence" value="ECO:0007669"/>
    <property type="project" value="UniProtKB-UniRule"/>
</dbReference>
<dbReference type="Gene3D" id="3.10.20.300">
    <property type="entry name" value="mk0293 like domain"/>
    <property type="match status" value="1"/>
</dbReference>
<dbReference type="Gene3D" id="3.30.70.1380">
    <property type="entry name" value="Transcriptional regulatory protein pf0864 domain like"/>
    <property type="match status" value="1"/>
</dbReference>
<dbReference type="HAMAP" id="MF_01074">
    <property type="entry name" value="LarC"/>
    <property type="match status" value="1"/>
</dbReference>
<dbReference type="InterPro" id="IPR002822">
    <property type="entry name" value="Ni_insertion"/>
</dbReference>
<dbReference type="NCBIfam" id="TIGR00299">
    <property type="entry name" value="nickel pincer cofactor biosynthesis protein LarC"/>
    <property type="match status" value="1"/>
</dbReference>
<dbReference type="PANTHER" id="PTHR36566">
    <property type="entry name" value="NICKEL INSERTION PROTEIN-RELATED"/>
    <property type="match status" value="1"/>
</dbReference>
<dbReference type="PANTHER" id="PTHR36566:SF1">
    <property type="entry name" value="PYRIDINIUM-3,5-BISTHIOCARBOXYLIC ACID MONONUCLEOTIDE NICKEL INSERTION PROTEIN"/>
    <property type="match status" value="1"/>
</dbReference>
<dbReference type="Pfam" id="PF01969">
    <property type="entry name" value="Ni_insertion"/>
    <property type="match status" value="1"/>
</dbReference>
<comment type="similarity">
    <text evidence="1">Belongs to the LarC family.</text>
</comment>
<protein>
    <recommendedName>
        <fullName evidence="1">Putative nickel insertion protein</fullName>
    </recommendedName>
</protein>
<sequence length="407" mass="44700">MKKLAYLECPTGIAGDMCLGALVDLGVPIDYLNQHLKGLGIDSEYRLWAEKVHRQGQQGTKVHVDLTLDPTHSDHHHHSHHSPHRHLPTIEQLIVNATLPPKAQDWSLKVFRQLALAEGAVHGIAPEKVHFHEVGATDAIVDIVGTCLGLDWLGIDQLYCSAMPTGGGTVKAAHGCLPVPVPAVLKLWELRHVPIYNNGINKELVTPTGAAIATTLSLEFGSSPSMRVQKVGLGAGTADLPIPNLLRLWLGESTETPQKETISVLETQIDDLSPQAIGYVFEALFEVGALDVFTSAIGMKKSRPGILLTVICPPDKVSVCERVIFRETTTLGIRHLTQERSILQREIHWVQTAYGQVKVKVASQGTGENQQIFNVQPEYEDCAELARKHNIPWRIIHQLALAAWNNH</sequence>
<reference key="1">
    <citation type="journal article" date="2011" name="MBio">
        <title>Novel metabolic attributes of the genus Cyanothece, comprising a group of unicellular nitrogen-fixing Cyanobacteria.</title>
        <authorList>
            <person name="Bandyopadhyay A."/>
            <person name="Elvitigala T."/>
            <person name="Welsh E."/>
            <person name="Stockel J."/>
            <person name="Liberton M."/>
            <person name="Min H."/>
            <person name="Sherman L.A."/>
            <person name="Pakrasi H.B."/>
        </authorList>
    </citation>
    <scope>NUCLEOTIDE SEQUENCE [LARGE SCALE GENOMIC DNA]</scope>
    <source>
        <strain>PCC 7424</strain>
    </source>
</reference>
<keyword id="KW-0533">Nickel</keyword>
<keyword id="KW-1185">Reference proteome</keyword>
<feature type="chain" id="PRO_1000136686" description="Putative nickel insertion protein">
    <location>
        <begin position="1"/>
        <end position="407"/>
    </location>
</feature>
<gene>
    <name type="ordered locus">PCC7424_1474</name>
</gene>
<evidence type="ECO:0000255" key="1">
    <source>
        <dbReference type="HAMAP-Rule" id="MF_01074"/>
    </source>
</evidence>
<proteinExistence type="inferred from homology"/>
<organism>
    <name type="scientific">Gloeothece citriformis (strain PCC 7424)</name>
    <name type="common">Cyanothece sp. (strain PCC 7424)</name>
    <dbReference type="NCBI Taxonomy" id="65393"/>
    <lineage>
        <taxon>Bacteria</taxon>
        <taxon>Bacillati</taxon>
        <taxon>Cyanobacteriota</taxon>
        <taxon>Cyanophyceae</taxon>
        <taxon>Oscillatoriophycideae</taxon>
        <taxon>Chroococcales</taxon>
        <taxon>Aphanothecaceae</taxon>
        <taxon>Gloeothece</taxon>
        <taxon>Gloeothece citriformis</taxon>
    </lineage>
</organism>
<accession>B7K8F6</accession>